<name>PRSA3_BACCR</name>
<sequence length="283" mass="32144">MKKKKIFIGTIISCVMLALSACGSSDNVVTSKVGNVTEKELSKELRQQYGESTLYQMMLSKALLDKYKVSDEEAKKKVEEAKDKMGENFKSTLEQLGLKNEDELKEKMKPEIAFEKAIKATVTDKDVKNNYKPEMKVSHILVKDEKTAKEIKEKVNNGEDFAALANQYSEDTGSKEQGGEISGFAPGQTVKEFEEAAYKLDAGQVSDPVKTTYGYHIIKVTDKKELKPFDEVKDKIRKDIEQQRLQDTTGKWKQQVVNDLLKDADIKVNNKEFKDTFKFLEKK</sequence>
<protein>
    <recommendedName>
        <fullName>Foldase protein PrsA 3</fullName>
        <ecNumber>5.2.1.8</ecNumber>
    </recommendedName>
</protein>
<dbReference type="EC" id="5.2.1.8"/>
<dbReference type="EMBL" id="AE016877">
    <property type="protein sequence ID" value="AAP09236.1"/>
    <property type="molecule type" value="Genomic_DNA"/>
</dbReference>
<dbReference type="RefSeq" id="NP_832035.1">
    <property type="nucleotide sequence ID" value="NC_004722.1"/>
</dbReference>
<dbReference type="RefSeq" id="WP_000727349.1">
    <property type="nucleotide sequence ID" value="NC_004722.1"/>
</dbReference>
<dbReference type="SMR" id="Q81DT1"/>
<dbReference type="STRING" id="226900.BC_2272"/>
<dbReference type="KEGG" id="bce:BC2272"/>
<dbReference type="PATRIC" id="fig|226900.8.peg.2295"/>
<dbReference type="HOGENOM" id="CLU_034646_6_1_9"/>
<dbReference type="OrthoDB" id="14196at2"/>
<dbReference type="Proteomes" id="UP000001417">
    <property type="component" value="Chromosome"/>
</dbReference>
<dbReference type="GO" id="GO:0005886">
    <property type="term" value="C:plasma membrane"/>
    <property type="evidence" value="ECO:0007669"/>
    <property type="project" value="UniProtKB-SubCell"/>
</dbReference>
<dbReference type="GO" id="GO:0003755">
    <property type="term" value="F:peptidyl-prolyl cis-trans isomerase activity"/>
    <property type="evidence" value="ECO:0007669"/>
    <property type="project" value="UniProtKB-UniRule"/>
</dbReference>
<dbReference type="GO" id="GO:0006457">
    <property type="term" value="P:protein folding"/>
    <property type="evidence" value="ECO:0007669"/>
    <property type="project" value="UniProtKB-UniRule"/>
</dbReference>
<dbReference type="FunFam" id="3.10.50.40:FF:000033">
    <property type="entry name" value="Foldase protein PrsA"/>
    <property type="match status" value="1"/>
</dbReference>
<dbReference type="Gene3D" id="3.10.50.40">
    <property type="match status" value="1"/>
</dbReference>
<dbReference type="HAMAP" id="MF_01145">
    <property type="entry name" value="Foldase_PrsA"/>
    <property type="match status" value="1"/>
</dbReference>
<dbReference type="InterPro" id="IPR023059">
    <property type="entry name" value="Foldase_PrsA"/>
</dbReference>
<dbReference type="InterPro" id="IPR046357">
    <property type="entry name" value="PPIase_dom_sf"/>
</dbReference>
<dbReference type="InterPro" id="IPR000297">
    <property type="entry name" value="PPIase_PpiC"/>
</dbReference>
<dbReference type="InterPro" id="IPR023058">
    <property type="entry name" value="PPIase_PpiC_CS"/>
</dbReference>
<dbReference type="InterPro" id="IPR050245">
    <property type="entry name" value="PrsA_foldase"/>
</dbReference>
<dbReference type="InterPro" id="IPR027304">
    <property type="entry name" value="Trigger_fact/SurA_dom_sf"/>
</dbReference>
<dbReference type="NCBIfam" id="NF002824">
    <property type="entry name" value="PRK02998.1"/>
    <property type="match status" value="1"/>
</dbReference>
<dbReference type="PANTHER" id="PTHR47245:SF1">
    <property type="entry name" value="FOLDASE PROTEIN PRSA"/>
    <property type="match status" value="1"/>
</dbReference>
<dbReference type="PANTHER" id="PTHR47245">
    <property type="entry name" value="PEPTIDYLPROLYL ISOMERASE"/>
    <property type="match status" value="1"/>
</dbReference>
<dbReference type="Pfam" id="PF13616">
    <property type="entry name" value="Rotamase_3"/>
    <property type="match status" value="1"/>
</dbReference>
<dbReference type="SUPFAM" id="SSF54534">
    <property type="entry name" value="FKBP-like"/>
    <property type="match status" value="1"/>
</dbReference>
<dbReference type="SUPFAM" id="SSF109998">
    <property type="entry name" value="Triger factor/SurA peptide-binding domain-like"/>
    <property type="match status" value="1"/>
</dbReference>
<dbReference type="PROSITE" id="PS01096">
    <property type="entry name" value="PPIC_PPIASE_1"/>
    <property type="match status" value="1"/>
</dbReference>
<dbReference type="PROSITE" id="PS50198">
    <property type="entry name" value="PPIC_PPIASE_2"/>
    <property type="match status" value="1"/>
</dbReference>
<dbReference type="PROSITE" id="PS51257">
    <property type="entry name" value="PROKAR_LIPOPROTEIN"/>
    <property type="match status" value="1"/>
</dbReference>
<evidence type="ECO:0000250" key="1"/>
<evidence type="ECO:0000255" key="2"/>
<evidence type="ECO:0000305" key="3"/>
<comment type="function">
    <text evidence="1">Plays a major role in protein secretion by helping the post-translocational extracellular folding of several secreted proteins.</text>
</comment>
<comment type="catalytic activity">
    <reaction>
        <text>[protein]-peptidylproline (omega=180) = [protein]-peptidylproline (omega=0)</text>
        <dbReference type="Rhea" id="RHEA:16237"/>
        <dbReference type="Rhea" id="RHEA-COMP:10747"/>
        <dbReference type="Rhea" id="RHEA-COMP:10748"/>
        <dbReference type="ChEBI" id="CHEBI:83833"/>
        <dbReference type="ChEBI" id="CHEBI:83834"/>
        <dbReference type="EC" id="5.2.1.8"/>
    </reaction>
</comment>
<comment type="subcellular location">
    <subcellularLocation>
        <location evidence="3">Cell membrane</location>
        <topology evidence="3">Lipid-anchor</topology>
    </subcellularLocation>
</comment>
<comment type="similarity">
    <text evidence="3">Belongs to the PrsA family.</text>
</comment>
<reference key="1">
    <citation type="journal article" date="2003" name="Nature">
        <title>Genome sequence of Bacillus cereus and comparative analysis with Bacillus anthracis.</title>
        <authorList>
            <person name="Ivanova N."/>
            <person name="Sorokin A."/>
            <person name="Anderson I."/>
            <person name="Galleron N."/>
            <person name="Candelon B."/>
            <person name="Kapatral V."/>
            <person name="Bhattacharyya A."/>
            <person name="Reznik G."/>
            <person name="Mikhailova N."/>
            <person name="Lapidus A."/>
            <person name="Chu L."/>
            <person name="Mazur M."/>
            <person name="Goltsman E."/>
            <person name="Larsen N."/>
            <person name="D'Souza M."/>
            <person name="Walunas T."/>
            <person name="Grechkin Y."/>
            <person name="Pusch G."/>
            <person name="Haselkorn R."/>
            <person name="Fonstein M."/>
            <person name="Ehrlich S.D."/>
            <person name="Overbeek R."/>
            <person name="Kyrpides N.C."/>
        </authorList>
    </citation>
    <scope>NUCLEOTIDE SEQUENCE [LARGE SCALE GENOMIC DNA]</scope>
    <source>
        <strain>ATCC 14579 / DSM 31 / CCUG 7414 / JCM 2152 / NBRC 15305 / NCIMB 9373 / NCTC 2599 / NRRL B-3711</strain>
    </source>
</reference>
<feature type="signal peptide" evidence="2">
    <location>
        <begin position="1"/>
        <end position="21"/>
    </location>
</feature>
<feature type="chain" id="PRO_0000029296" description="Foldase protein PrsA 3">
    <location>
        <begin position="22"/>
        <end position="283"/>
    </location>
</feature>
<feature type="domain" description="PpiC">
    <location>
        <begin position="132"/>
        <end position="222"/>
    </location>
</feature>
<feature type="lipid moiety-binding region" description="N-palmitoyl cysteine" evidence="2">
    <location>
        <position position="22"/>
    </location>
</feature>
<feature type="lipid moiety-binding region" description="S-diacylglycerol cysteine" evidence="2">
    <location>
        <position position="22"/>
    </location>
</feature>
<proteinExistence type="inferred from homology"/>
<accession>Q81DT1</accession>
<keyword id="KW-1003">Cell membrane</keyword>
<keyword id="KW-0413">Isomerase</keyword>
<keyword id="KW-0449">Lipoprotein</keyword>
<keyword id="KW-0472">Membrane</keyword>
<keyword id="KW-0564">Palmitate</keyword>
<keyword id="KW-1185">Reference proteome</keyword>
<keyword id="KW-0697">Rotamase</keyword>
<keyword id="KW-0732">Signal</keyword>
<gene>
    <name type="primary">prsA3</name>
    <name type="ordered locus">BC_2272</name>
</gene>
<organism>
    <name type="scientific">Bacillus cereus (strain ATCC 14579 / DSM 31 / CCUG 7414 / JCM 2152 / NBRC 15305 / NCIMB 9373 / NCTC 2599 / NRRL B-3711)</name>
    <dbReference type="NCBI Taxonomy" id="226900"/>
    <lineage>
        <taxon>Bacteria</taxon>
        <taxon>Bacillati</taxon>
        <taxon>Bacillota</taxon>
        <taxon>Bacilli</taxon>
        <taxon>Bacillales</taxon>
        <taxon>Bacillaceae</taxon>
        <taxon>Bacillus</taxon>
        <taxon>Bacillus cereus group</taxon>
    </lineage>
</organism>